<evidence type="ECO:0000250" key="1">
    <source>
        <dbReference type="UniProtKB" id="P69937"/>
    </source>
</evidence>
<evidence type="ECO:0000255" key="2"/>
<evidence type="ECO:0000305" key="3"/>
<sequence length="104" mass="10651">MAWIILVIAGLLEVIWAIGLKYSHGFSRLTPSIITLVAMAASVFLLAYAMKSLPAGTAYAVWTGIGAVGTAILGIVLLGESASLARILSLGLILAGIIGLKLAS</sequence>
<gene>
    <name evidence="1" type="primary">gdx</name>
    <name type="synonym">sugE</name>
    <name type="ordered locus">YPTB0409</name>
</gene>
<dbReference type="EMBL" id="BX936398">
    <property type="protein sequence ID" value="CAH19649.1"/>
    <property type="molecule type" value="Genomic_DNA"/>
</dbReference>
<dbReference type="RefSeq" id="WP_002228124.1">
    <property type="nucleotide sequence ID" value="NZ_CP009712.1"/>
</dbReference>
<dbReference type="SMR" id="Q66FD1"/>
<dbReference type="GeneID" id="96663908"/>
<dbReference type="KEGG" id="ypo:BZ17_2160"/>
<dbReference type="KEGG" id="yps:YPTB0409"/>
<dbReference type="PATRIC" id="fig|273123.14.peg.2285"/>
<dbReference type="Proteomes" id="UP000001011">
    <property type="component" value="Chromosome"/>
</dbReference>
<dbReference type="GO" id="GO:0005886">
    <property type="term" value="C:plasma membrane"/>
    <property type="evidence" value="ECO:0007669"/>
    <property type="project" value="UniProtKB-SubCell"/>
</dbReference>
<dbReference type="GO" id="GO:0022857">
    <property type="term" value="F:transmembrane transporter activity"/>
    <property type="evidence" value="ECO:0007669"/>
    <property type="project" value="InterPro"/>
</dbReference>
<dbReference type="GO" id="GO:0006811">
    <property type="term" value="P:monoatomic ion transport"/>
    <property type="evidence" value="ECO:0007669"/>
    <property type="project" value="UniProtKB-KW"/>
</dbReference>
<dbReference type="FunFam" id="1.10.3730.20:FF:000001">
    <property type="entry name" value="Quaternary ammonium compound resistance transporter SugE"/>
    <property type="match status" value="1"/>
</dbReference>
<dbReference type="Gene3D" id="1.10.3730.20">
    <property type="match status" value="1"/>
</dbReference>
<dbReference type="InterPro" id="IPR000390">
    <property type="entry name" value="Small_drug/metabolite_transptr"/>
</dbReference>
<dbReference type="InterPro" id="IPR045324">
    <property type="entry name" value="Small_multidrug_res"/>
</dbReference>
<dbReference type="NCBIfam" id="NF008512">
    <property type="entry name" value="PRK11431.1"/>
    <property type="match status" value="1"/>
</dbReference>
<dbReference type="PANTHER" id="PTHR30561:SF0">
    <property type="entry name" value="GUANIDINIUM EXPORTER"/>
    <property type="match status" value="1"/>
</dbReference>
<dbReference type="PANTHER" id="PTHR30561">
    <property type="entry name" value="SMR FAMILY PROTON-DEPENDENT DRUG EFFLUX TRANSPORTER SUGE"/>
    <property type="match status" value="1"/>
</dbReference>
<dbReference type="Pfam" id="PF00893">
    <property type="entry name" value="Multi_Drug_Res"/>
    <property type="match status" value="1"/>
</dbReference>
<dbReference type="SUPFAM" id="SSF103481">
    <property type="entry name" value="Multidrug resistance efflux transporter EmrE"/>
    <property type="match status" value="1"/>
</dbReference>
<name>GDX_YERPS</name>
<organism>
    <name type="scientific">Yersinia pseudotuberculosis serotype I (strain IP32953)</name>
    <dbReference type="NCBI Taxonomy" id="273123"/>
    <lineage>
        <taxon>Bacteria</taxon>
        <taxon>Pseudomonadati</taxon>
        <taxon>Pseudomonadota</taxon>
        <taxon>Gammaproteobacteria</taxon>
        <taxon>Enterobacterales</taxon>
        <taxon>Yersiniaceae</taxon>
        <taxon>Yersinia</taxon>
    </lineage>
</organism>
<protein>
    <recommendedName>
        <fullName evidence="1">Guanidinium exporter</fullName>
    </recommendedName>
</protein>
<comment type="function">
    <text evidence="1">Guanidinium ion exporter. Couples guanidinium export to the proton motive force, exchanging one guanidinium ion for two protons.</text>
</comment>
<comment type="subcellular location">
    <subcellularLocation>
        <location evidence="1">Cell inner membrane</location>
        <topology evidence="1">Multi-pass membrane protein</topology>
    </subcellularLocation>
</comment>
<comment type="similarity">
    <text evidence="3">Belongs to the drug/metabolite transporter (DMT) superfamily. Small multidrug resistance (SMR) (TC 2.A.7.1) family. Gdx/SugE subfamily.</text>
</comment>
<keyword id="KW-0997">Cell inner membrane</keyword>
<keyword id="KW-1003">Cell membrane</keyword>
<keyword id="KW-0406">Ion transport</keyword>
<keyword id="KW-0472">Membrane</keyword>
<keyword id="KW-0812">Transmembrane</keyword>
<keyword id="KW-1133">Transmembrane helix</keyword>
<keyword id="KW-0813">Transport</keyword>
<reference key="1">
    <citation type="journal article" date="2004" name="Proc. Natl. Acad. Sci. U.S.A.">
        <title>Insights into the evolution of Yersinia pestis through whole-genome comparison with Yersinia pseudotuberculosis.</title>
        <authorList>
            <person name="Chain P.S.G."/>
            <person name="Carniel E."/>
            <person name="Larimer F.W."/>
            <person name="Lamerdin J."/>
            <person name="Stoutland P.O."/>
            <person name="Regala W.M."/>
            <person name="Georgescu A.M."/>
            <person name="Vergez L.M."/>
            <person name="Land M.L."/>
            <person name="Motin V.L."/>
            <person name="Brubaker R.R."/>
            <person name="Fowler J."/>
            <person name="Hinnebusch J."/>
            <person name="Marceau M."/>
            <person name="Medigue C."/>
            <person name="Simonet M."/>
            <person name="Chenal-Francisque V."/>
            <person name="Souza B."/>
            <person name="Dacheux D."/>
            <person name="Elliott J.M."/>
            <person name="Derbise A."/>
            <person name="Hauser L.J."/>
            <person name="Garcia E."/>
        </authorList>
    </citation>
    <scope>NUCLEOTIDE SEQUENCE [LARGE SCALE GENOMIC DNA]</scope>
    <source>
        <strain>IP32953</strain>
    </source>
</reference>
<feature type="chain" id="PRO_0000108109" description="Guanidinium exporter">
    <location>
        <begin position="1"/>
        <end position="104"/>
    </location>
</feature>
<feature type="topological domain" description="Cytoplasmic" evidence="2">
    <location>
        <position position="1"/>
    </location>
</feature>
<feature type="transmembrane region" description="Helical" evidence="2">
    <location>
        <begin position="2"/>
        <end position="19"/>
    </location>
</feature>
<feature type="topological domain" description="Periplasmic" evidence="2">
    <location>
        <begin position="20"/>
        <end position="28"/>
    </location>
</feature>
<feature type="transmembrane region" description="Helical" evidence="2">
    <location>
        <begin position="29"/>
        <end position="48"/>
    </location>
</feature>
<feature type="topological domain" description="Cytoplasmic" evidence="2">
    <location>
        <begin position="49"/>
        <end position="54"/>
    </location>
</feature>
<feature type="transmembrane region" description="Helical" evidence="2">
    <location>
        <begin position="55"/>
        <end position="77"/>
    </location>
</feature>
<feature type="topological domain" description="Periplasmic" evidence="2">
    <location>
        <begin position="78"/>
        <end position="81"/>
    </location>
</feature>
<feature type="transmembrane region" description="Helical" evidence="2">
    <location>
        <begin position="82"/>
        <end position="100"/>
    </location>
</feature>
<feature type="topological domain" description="Cytoplasmic" evidence="2">
    <location>
        <begin position="101"/>
        <end position="104"/>
    </location>
</feature>
<accession>Q66FD1</accession>
<proteinExistence type="inferred from homology"/>